<comment type="function">
    <text evidence="5">May act as a component of a corepressor complex that represses transcription.</text>
</comment>
<comment type="subcellular location">
    <subcellularLocation>
        <location evidence="2 3">Nucleus</location>
    </subcellularLocation>
</comment>
<comment type="similarity">
    <text evidence="5">Belongs to the CoREST family.</text>
</comment>
<dbReference type="EMBL" id="BC070565">
    <property type="protein sequence ID" value="AAH70565.1"/>
    <property type="molecule type" value="mRNA"/>
</dbReference>
<dbReference type="RefSeq" id="NP_001084784.1">
    <property type="nucleotide sequence ID" value="NM_001091315.1"/>
</dbReference>
<dbReference type="RefSeq" id="XP_018112105.1">
    <property type="nucleotide sequence ID" value="XM_018256616.1"/>
</dbReference>
<dbReference type="SMR" id="Q6NRZ0"/>
<dbReference type="BioGRID" id="101187">
    <property type="interactions" value="1"/>
</dbReference>
<dbReference type="IntAct" id="Q6NRZ0">
    <property type="interactions" value="1"/>
</dbReference>
<dbReference type="DNASU" id="431821"/>
<dbReference type="GeneID" id="431821"/>
<dbReference type="KEGG" id="xla:431821"/>
<dbReference type="AGR" id="Xenbase:XB-GENE-6251773"/>
<dbReference type="CTD" id="431821"/>
<dbReference type="Xenbase" id="XB-GENE-6251773">
    <property type="gene designation" value="rcor2.L"/>
</dbReference>
<dbReference type="OMA" id="CIKQINS"/>
<dbReference type="OrthoDB" id="10064338at2759"/>
<dbReference type="Proteomes" id="UP000186698">
    <property type="component" value="Chromosome 4L"/>
</dbReference>
<dbReference type="Bgee" id="431821">
    <property type="expression patterns" value="Expressed in egg cell and 18 other cell types or tissues"/>
</dbReference>
<dbReference type="GO" id="GO:0000118">
    <property type="term" value="C:histone deacetylase complex"/>
    <property type="evidence" value="ECO:0000318"/>
    <property type="project" value="GO_Central"/>
</dbReference>
<dbReference type="GO" id="GO:0005634">
    <property type="term" value="C:nucleus"/>
    <property type="evidence" value="ECO:0000314"/>
    <property type="project" value="BHF-UCL"/>
</dbReference>
<dbReference type="GO" id="GO:0005667">
    <property type="term" value="C:transcription regulator complex"/>
    <property type="evidence" value="ECO:0000318"/>
    <property type="project" value="GO_Central"/>
</dbReference>
<dbReference type="GO" id="GO:0140297">
    <property type="term" value="F:DNA-binding transcription factor binding"/>
    <property type="evidence" value="ECO:0000353"/>
    <property type="project" value="BHF-UCL"/>
</dbReference>
<dbReference type="GO" id="GO:0003714">
    <property type="term" value="F:transcription corepressor activity"/>
    <property type="evidence" value="ECO:0000314"/>
    <property type="project" value="BHF-UCL"/>
</dbReference>
<dbReference type="GO" id="GO:0045892">
    <property type="term" value="P:negative regulation of DNA-templated transcription"/>
    <property type="evidence" value="ECO:0000318"/>
    <property type="project" value="GO_Central"/>
</dbReference>
<dbReference type="GO" id="GO:0006357">
    <property type="term" value="P:regulation of transcription by RNA polymerase II"/>
    <property type="evidence" value="ECO:0000318"/>
    <property type="project" value="GO_Central"/>
</dbReference>
<dbReference type="CDD" id="cd00167">
    <property type="entry name" value="SANT"/>
    <property type="match status" value="1"/>
</dbReference>
<dbReference type="FunFam" id="1.20.58.1880:FF:000001">
    <property type="entry name" value="REST corepressor 1"/>
    <property type="match status" value="1"/>
</dbReference>
<dbReference type="FunFam" id="1.10.10.60:FF:000033">
    <property type="entry name" value="REST corepressor 3"/>
    <property type="match status" value="1"/>
</dbReference>
<dbReference type="FunFam" id="4.10.1240.50:FF:000002">
    <property type="entry name" value="REST corepressor isoform X1"/>
    <property type="match status" value="1"/>
</dbReference>
<dbReference type="Gene3D" id="1.20.58.1880">
    <property type="match status" value="1"/>
</dbReference>
<dbReference type="Gene3D" id="4.10.1240.50">
    <property type="match status" value="1"/>
</dbReference>
<dbReference type="Gene3D" id="1.10.10.60">
    <property type="entry name" value="Homeodomain-like"/>
    <property type="match status" value="1"/>
</dbReference>
<dbReference type="InterPro" id="IPR000949">
    <property type="entry name" value="ELM2_dom"/>
</dbReference>
<dbReference type="InterPro" id="IPR009057">
    <property type="entry name" value="Homeodomain-like_sf"/>
</dbReference>
<dbReference type="InterPro" id="IPR049048">
    <property type="entry name" value="REST_helical"/>
</dbReference>
<dbReference type="InterPro" id="IPR001005">
    <property type="entry name" value="SANT/Myb"/>
</dbReference>
<dbReference type="InterPro" id="IPR017884">
    <property type="entry name" value="SANT_dom"/>
</dbReference>
<dbReference type="InterPro" id="IPR051066">
    <property type="entry name" value="Trans_reg/Corepressor"/>
</dbReference>
<dbReference type="PANTHER" id="PTHR16089:SF12">
    <property type="entry name" value="REST COREPRESSOR 2"/>
    <property type="match status" value="1"/>
</dbReference>
<dbReference type="PANTHER" id="PTHR16089">
    <property type="entry name" value="REST COREPRESSOR COREST PROTEIN-RELATED"/>
    <property type="match status" value="1"/>
</dbReference>
<dbReference type="Pfam" id="PF01448">
    <property type="entry name" value="ELM2"/>
    <property type="match status" value="1"/>
</dbReference>
<dbReference type="Pfam" id="PF00249">
    <property type="entry name" value="Myb_DNA-binding"/>
    <property type="match status" value="1"/>
</dbReference>
<dbReference type="Pfam" id="PF20878">
    <property type="entry name" value="REST_helical"/>
    <property type="match status" value="1"/>
</dbReference>
<dbReference type="SMART" id="SM01189">
    <property type="entry name" value="ELM2"/>
    <property type="match status" value="1"/>
</dbReference>
<dbReference type="SMART" id="SM00717">
    <property type="entry name" value="SANT"/>
    <property type="match status" value="2"/>
</dbReference>
<dbReference type="SUPFAM" id="SSF46689">
    <property type="entry name" value="Homeodomain-like"/>
    <property type="match status" value="2"/>
</dbReference>
<dbReference type="PROSITE" id="PS51156">
    <property type="entry name" value="ELM2"/>
    <property type="match status" value="1"/>
</dbReference>
<dbReference type="PROSITE" id="PS51293">
    <property type="entry name" value="SANT"/>
    <property type="match status" value="2"/>
</dbReference>
<proteinExistence type="evidence at transcript level"/>
<feature type="chain" id="PRO_0000226780" description="REST corepressor 2">
    <location>
        <begin position="1"/>
        <end position="503"/>
    </location>
</feature>
<feature type="domain" description="ELM2" evidence="2">
    <location>
        <begin position="41"/>
        <end position="126"/>
    </location>
</feature>
<feature type="domain" description="SANT 1" evidence="3">
    <location>
        <begin position="127"/>
        <end position="178"/>
    </location>
</feature>
<feature type="domain" description="SANT 2" evidence="3">
    <location>
        <begin position="327"/>
        <end position="378"/>
    </location>
</feature>
<feature type="region of interest" description="Disordered" evidence="4">
    <location>
        <begin position="1"/>
        <end position="62"/>
    </location>
</feature>
<feature type="region of interest" description="Disordered" evidence="4">
    <location>
        <begin position="385"/>
        <end position="503"/>
    </location>
</feature>
<feature type="coiled-coil region" evidence="1">
    <location>
        <begin position="182"/>
        <end position="206"/>
    </location>
</feature>
<feature type="coiled-coil region" evidence="1">
    <location>
        <begin position="286"/>
        <end position="314"/>
    </location>
</feature>
<feature type="compositionally biased region" description="Polar residues" evidence="4">
    <location>
        <begin position="399"/>
        <end position="412"/>
    </location>
</feature>
<feature type="compositionally biased region" description="Low complexity" evidence="4">
    <location>
        <begin position="423"/>
        <end position="442"/>
    </location>
</feature>
<protein>
    <recommendedName>
        <fullName>REST corepressor 2</fullName>
    </recommendedName>
</protein>
<gene>
    <name type="primary">rcor2</name>
</gene>
<accession>Q6NRZ0</accession>
<sequence length="503" mass="56086">MPSVMEKSHGSSAVISRNRAKSDSLGNSEEESSEDEAPRDSMIRVGSDYQAQIPECKPDNTSPSGNVELKGMLVWSPSQFVSDAKLNEYITMAKEKHGYNVEQSLGMLLWHKHDVERSLADLANFTPFPEEWSVEDKVLFEQAFSFHGKSFQRIQQMLPEKLIPSLVKYYYSWKKTRSRTSVMDRQARRLQAKREEGMEEVEDQIKMSDNETDVTETKKEAPVPQKVVSGAVSGKTGPVRKEPLISQYRHHPLRSRQRPPKGIHLNKSDVSAVCASSEMPAIALCQLETQLISLKRQVQNIKQMNSSLKESLEGGISEMRPPELNIKLNARWTTDEQLLAVQAVRKYGKDFQAISEVLGNKTPSQVKTFFISYRRRFNLEEVLQEWEAEQEPSPPPASTDMSNKTSGSSQTPNEEDDEVQITSVSSSSQPAPPAAAAAASLSLPPPLLRPAIPCAPTLHRQPPPLQPGRLLQPRPPPLVRPAPRQSPRAPPALVGSHAESTFS</sequence>
<evidence type="ECO:0000255" key="1"/>
<evidence type="ECO:0000255" key="2">
    <source>
        <dbReference type="PROSITE-ProRule" id="PRU00512"/>
    </source>
</evidence>
<evidence type="ECO:0000255" key="3">
    <source>
        <dbReference type="PROSITE-ProRule" id="PRU00624"/>
    </source>
</evidence>
<evidence type="ECO:0000256" key="4">
    <source>
        <dbReference type="SAM" id="MobiDB-lite"/>
    </source>
</evidence>
<evidence type="ECO:0000305" key="5"/>
<organism>
    <name type="scientific">Xenopus laevis</name>
    <name type="common">African clawed frog</name>
    <dbReference type="NCBI Taxonomy" id="8355"/>
    <lineage>
        <taxon>Eukaryota</taxon>
        <taxon>Metazoa</taxon>
        <taxon>Chordata</taxon>
        <taxon>Craniata</taxon>
        <taxon>Vertebrata</taxon>
        <taxon>Euteleostomi</taxon>
        <taxon>Amphibia</taxon>
        <taxon>Batrachia</taxon>
        <taxon>Anura</taxon>
        <taxon>Pipoidea</taxon>
        <taxon>Pipidae</taxon>
        <taxon>Xenopodinae</taxon>
        <taxon>Xenopus</taxon>
        <taxon>Xenopus</taxon>
    </lineage>
</organism>
<keyword id="KW-0175">Coiled coil</keyword>
<keyword id="KW-0539">Nucleus</keyword>
<keyword id="KW-1185">Reference proteome</keyword>
<keyword id="KW-0677">Repeat</keyword>
<keyword id="KW-0678">Repressor</keyword>
<keyword id="KW-0804">Transcription</keyword>
<keyword id="KW-0805">Transcription regulation</keyword>
<name>RCOR2_XENLA</name>
<reference key="1">
    <citation type="submission" date="2004-05" db="EMBL/GenBank/DDBJ databases">
        <authorList>
            <consortium name="NIH - Xenopus Gene Collection (XGC) project"/>
        </authorList>
    </citation>
    <scope>NUCLEOTIDE SEQUENCE [LARGE SCALE MRNA]</scope>
    <source>
        <tissue>Embryo</tissue>
    </source>
</reference>